<comment type="function">
    <text evidence="1">GTPase that plays an essential role in the late steps of ribosome biogenesis.</text>
</comment>
<comment type="subunit">
    <text evidence="1">Associates with the 50S ribosomal subunit.</text>
</comment>
<comment type="similarity">
    <text evidence="1">Belongs to the TRAFAC class TrmE-Era-EngA-EngB-Septin-like GTPase superfamily. EngA (Der) GTPase family.</text>
</comment>
<gene>
    <name evidence="1" type="primary">der</name>
    <name type="synonym">engA</name>
    <name type="ordered locus">SACOL1515</name>
</gene>
<protein>
    <recommendedName>
        <fullName evidence="1">GTPase Der</fullName>
    </recommendedName>
    <alternativeName>
        <fullName evidence="1">GTP-binding protein EngA</fullName>
    </alternativeName>
</protein>
<reference key="1">
    <citation type="journal article" date="2005" name="J. Bacteriol.">
        <title>Insights on evolution of virulence and resistance from the complete genome analysis of an early methicillin-resistant Staphylococcus aureus strain and a biofilm-producing methicillin-resistant Staphylococcus epidermidis strain.</title>
        <authorList>
            <person name="Gill S.R."/>
            <person name="Fouts D.E."/>
            <person name="Archer G.L."/>
            <person name="Mongodin E.F."/>
            <person name="DeBoy R.T."/>
            <person name="Ravel J."/>
            <person name="Paulsen I.T."/>
            <person name="Kolonay J.F."/>
            <person name="Brinkac L.M."/>
            <person name="Beanan M.J."/>
            <person name="Dodson R.J."/>
            <person name="Daugherty S.C."/>
            <person name="Madupu R."/>
            <person name="Angiuoli S.V."/>
            <person name="Durkin A.S."/>
            <person name="Haft D.H."/>
            <person name="Vamathevan J.J."/>
            <person name="Khouri H."/>
            <person name="Utterback T.R."/>
            <person name="Lee C."/>
            <person name="Dimitrov G."/>
            <person name="Jiang L."/>
            <person name="Qin H."/>
            <person name="Weidman J."/>
            <person name="Tran K."/>
            <person name="Kang K.H."/>
            <person name="Hance I.R."/>
            <person name="Nelson K.E."/>
            <person name="Fraser C.M."/>
        </authorList>
    </citation>
    <scope>NUCLEOTIDE SEQUENCE [LARGE SCALE GENOMIC DNA]</scope>
    <source>
        <strain>COL</strain>
    </source>
</reference>
<organism>
    <name type="scientific">Staphylococcus aureus (strain COL)</name>
    <dbReference type="NCBI Taxonomy" id="93062"/>
    <lineage>
        <taxon>Bacteria</taxon>
        <taxon>Bacillati</taxon>
        <taxon>Bacillota</taxon>
        <taxon>Bacilli</taxon>
        <taxon>Bacillales</taxon>
        <taxon>Staphylococcaceae</taxon>
        <taxon>Staphylococcus</taxon>
    </lineage>
</organism>
<accession>Q5HFU8</accession>
<dbReference type="EMBL" id="CP000046">
    <property type="protein sequence ID" value="AAW36710.1"/>
    <property type="molecule type" value="Genomic_DNA"/>
</dbReference>
<dbReference type="RefSeq" id="WP_000165530.1">
    <property type="nucleotide sequence ID" value="NZ_JBGOFO010000003.1"/>
</dbReference>
<dbReference type="SMR" id="Q5HFU8"/>
<dbReference type="KEGG" id="sac:SACOL1515"/>
<dbReference type="HOGENOM" id="CLU_016077_6_2_9"/>
<dbReference type="Proteomes" id="UP000000530">
    <property type="component" value="Chromosome"/>
</dbReference>
<dbReference type="GO" id="GO:0005525">
    <property type="term" value="F:GTP binding"/>
    <property type="evidence" value="ECO:0007669"/>
    <property type="project" value="UniProtKB-UniRule"/>
</dbReference>
<dbReference type="GO" id="GO:0043022">
    <property type="term" value="F:ribosome binding"/>
    <property type="evidence" value="ECO:0007669"/>
    <property type="project" value="TreeGrafter"/>
</dbReference>
<dbReference type="GO" id="GO:0042254">
    <property type="term" value="P:ribosome biogenesis"/>
    <property type="evidence" value="ECO:0007669"/>
    <property type="project" value="UniProtKB-KW"/>
</dbReference>
<dbReference type="CDD" id="cd01894">
    <property type="entry name" value="EngA1"/>
    <property type="match status" value="1"/>
</dbReference>
<dbReference type="CDD" id="cd01895">
    <property type="entry name" value="EngA2"/>
    <property type="match status" value="1"/>
</dbReference>
<dbReference type="FunFam" id="3.30.300.20:FF:000004">
    <property type="entry name" value="GTPase Der"/>
    <property type="match status" value="1"/>
</dbReference>
<dbReference type="FunFam" id="3.40.50.300:FF:000040">
    <property type="entry name" value="GTPase Der"/>
    <property type="match status" value="1"/>
</dbReference>
<dbReference type="FunFam" id="3.40.50.300:FF:000057">
    <property type="entry name" value="GTPase Der"/>
    <property type="match status" value="1"/>
</dbReference>
<dbReference type="Gene3D" id="3.30.300.20">
    <property type="match status" value="1"/>
</dbReference>
<dbReference type="Gene3D" id="3.40.50.300">
    <property type="entry name" value="P-loop containing nucleotide triphosphate hydrolases"/>
    <property type="match status" value="2"/>
</dbReference>
<dbReference type="HAMAP" id="MF_00195">
    <property type="entry name" value="GTPase_Der"/>
    <property type="match status" value="1"/>
</dbReference>
<dbReference type="InterPro" id="IPR031166">
    <property type="entry name" value="G_ENGA"/>
</dbReference>
<dbReference type="InterPro" id="IPR006073">
    <property type="entry name" value="GTP-bd"/>
</dbReference>
<dbReference type="InterPro" id="IPR016484">
    <property type="entry name" value="GTPase_Der"/>
</dbReference>
<dbReference type="InterPro" id="IPR032859">
    <property type="entry name" value="KH_dom-like"/>
</dbReference>
<dbReference type="InterPro" id="IPR015946">
    <property type="entry name" value="KH_dom-like_a/b"/>
</dbReference>
<dbReference type="InterPro" id="IPR027417">
    <property type="entry name" value="P-loop_NTPase"/>
</dbReference>
<dbReference type="InterPro" id="IPR005225">
    <property type="entry name" value="Small_GTP-bd"/>
</dbReference>
<dbReference type="NCBIfam" id="TIGR03594">
    <property type="entry name" value="GTPase_EngA"/>
    <property type="match status" value="1"/>
</dbReference>
<dbReference type="NCBIfam" id="TIGR00231">
    <property type="entry name" value="small_GTP"/>
    <property type="match status" value="2"/>
</dbReference>
<dbReference type="PANTHER" id="PTHR43834">
    <property type="entry name" value="GTPASE DER"/>
    <property type="match status" value="1"/>
</dbReference>
<dbReference type="PANTHER" id="PTHR43834:SF6">
    <property type="entry name" value="GTPASE DER"/>
    <property type="match status" value="1"/>
</dbReference>
<dbReference type="Pfam" id="PF14714">
    <property type="entry name" value="KH_dom-like"/>
    <property type="match status" value="1"/>
</dbReference>
<dbReference type="Pfam" id="PF01926">
    <property type="entry name" value="MMR_HSR1"/>
    <property type="match status" value="2"/>
</dbReference>
<dbReference type="PIRSF" id="PIRSF006485">
    <property type="entry name" value="GTP-binding_EngA"/>
    <property type="match status" value="1"/>
</dbReference>
<dbReference type="PRINTS" id="PR00326">
    <property type="entry name" value="GTP1OBG"/>
</dbReference>
<dbReference type="SUPFAM" id="SSF52540">
    <property type="entry name" value="P-loop containing nucleoside triphosphate hydrolases"/>
    <property type="match status" value="2"/>
</dbReference>
<dbReference type="PROSITE" id="PS51712">
    <property type="entry name" value="G_ENGA"/>
    <property type="match status" value="2"/>
</dbReference>
<proteinExistence type="inferred from homology"/>
<name>DER_STAAC</name>
<keyword id="KW-0342">GTP-binding</keyword>
<keyword id="KW-0547">Nucleotide-binding</keyword>
<keyword id="KW-0677">Repeat</keyword>
<keyword id="KW-0690">Ribosome biogenesis</keyword>
<feature type="chain" id="PRO_0000179042" description="GTPase Der">
    <location>
        <begin position="1"/>
        <end position="436"/>
    </location>
</feature>
<feature type="domain" description="EngA-type G 1">
    <location>
        <begin position="4"/>
        <end position="167"/>
    </location>
</feature>
<feature type="domain" description="EngA-type G 2">
    <location>
        <begin position="176"/>
        <end position="351"/>
    </location>
</feature>
<feature type="domain" description="KH-like" evidence="1">
    <location>
        <begin position="352"/>
        <end position="436"/>
    </location>
</feature>
<feature type="binding site" evidence="1">
    <location>
        <begin position="10"/>
        <end position="17"/>
    </location>
    <ligand>
        <name>GTP</name>
        <dbReference type="ChEBI" id="CHEBI:37565"/>
        <label>1</label>
    </ligand>
</feature>
<feature type="binding site" evidence="1">
    <location>
        <begin position="57"/>
        <end position="61"/>
    </location>
    <ligand>
        <name>GTP</name>
        <dbReference type="ChEBI" id="CHEBI:37565"/>
        <label>1</label>
    </ligand>
</feature>
<feature type="binding site" evidence="1">
    <location>
        <begin position="119"/>
        <end position="122"/>
    </location>
    <ligand>
        <name>GTP</name>
        <dbReference type="ChEBI" id="CHEBI:37565"/>
        <label>1</label>
    </ligand>
</feature>
<feature type="binding site" evidence="1">
    <location>
        <begin position="182"/>
        <end position="189"/>
    </location>
    <ligand>
        <name>GTP</name>
        <dbReference type="ChEBI" id="CHEBI:37565"/>
        <label>2</label>
    </ligand>
</feature>
<feature type="binding site" evidence="1">
    <location>
        <begin position="229"/>
        <end position="233"/>
    </location>
    <ligand>
        <name>GTP</name>
        <dbReference type="ChEBI" id="CHEBI:37565"/>
        <label>2</label>
    </ligand>
</feature>
<feature type="binding site" evidence="1">
    <location>
        <begin position="294"/>
        <end position="297"/>
    </location>
    <ligand>
        <name>GTP</name>
        <dbReference type="ChEBI" id="CHEBI:37565"/>
        <label>2</label>
    </ligand>
</feature>
<evidence type="ECO:0000255" key="1">
    <source>
        <dbReference type="HAMAP-Rule" id="MF_00195"/>
    </source>
</evidence>
<sequence length="436" mass="48980">MTKPIVAIVGRPNVGKSTIFNRIVGERVSIVEDTPGVTRDRIYSSGEWLTHDFNIIDTGGIEIGDAPFQTQIRAQAEIAIDEADVIIFMVNVREGLTQSDEMVAQILYKSKKPVVLAVNKVDNMEMRTDVYDFYSLGFGEPYPISGSHGLGLGDLLDAVVSHFGEEEEDPYDEDTIRLSIIGRPNVGKSSLVNAILGEDRVIVSNVAGTTRDAIDTEYSYDGQDYVLIDTAGMRKKGKVYESTEKYSVLRALKAIERSNVVLVVIDAEQGIIEQDKRVAGYAHEQGKAVVIVVNKWDTVEKDSKTMKKFEDEVRKEFQFLDYAQIAFVSAKERTRLRTLFPYINEASENHKKRVQSSTLNEVVTDAISMNPTPTDKGRRLNVFYATQVAIEPPTFVVFVNDVELMHFSYKRYLENQIRAAFGFEGTPIHIIARKRN</sequence>